<comment type="function">
    <text evidence="1">Catalyzes the transfer of an acetyl group from acetyl-CoA to tetrahydrodipicolinate.</text>
</comment>
<comment type="catalytic activity">
    <reaction evidence="1">
        <text>(S)-2,3,4,5-tetrahydrodipicolinate + acetyl-CoA + H2O = L-2-acetamido-6-oxoheptanedioate + CoA</text>
        <dbReference type="Rhea" id="RHEA:13085"/>
        <dbReference type="ChEBI" id="CHEBI:15377"/>
        <dbReference type="ChEBI" id="CHEBI:16845"/>
        <dbReference type="ChEBI" id="CHEBI:57287"/>
        <dbReference type="ChEBI" id="CHEBI:57288"/>
        <dbReference type="ChEBI" id="CHEBI:58117"/>
        <dbReference type="EC" id="2.3.1.89"/>
    </reaction>
</comment>
<comment type="pathway">
    <text evidence="1">Amino-acid biosynthesis; L-lysine biosynthesis via DAP pathway; LL-2,6-diaminopimelate from (S)-tetrahydrodipicolinate (acetylase route): step 1/3.</text>
</comment>
<comment type="similarity">
    <text evidence="1">Belongs to the transferase hexapeptide repeat family. DapH subfamily.</text>
</comment>
<dbReference type="EC" id="2.3.1.89" evidence="1"/>
<dbReference type="EMBL" id="AP006627">
    <property type="protein sequence ID" value="BAD64968.1"/>
    <property type="molecule type" value="Genomic_DNA"/>
</dbReference>
<dbReference type="SMR" id="Q5WF92"/>
<dbReference type="STRING" id="66692.ABC2433"/>
<dbReference type="KEGG" id="bcl:ABC2433"/>
<dbReference type="eggNOG" id="COG2171">
    <property type="taxonomic scope" value="Bacteria"/>
</dbReference>
<dbReference type="HOGENOM" id="CLU_103751_0_0_9"/>
<dbReference type="OrthoDB" id="9788080at2"/>
<dbReference type="UniPathway" id="UPA00034">
    <property type="reaction ID" value="UER00022"/>
</dbReference>
<dbReference type="Proteomes" id="UP000001168">
    <property type="component" value="Chromosome"/>
</dbReference>
<dbReference type="GO" id="GO:0047200">
    <property type="term" value="F:tetrahydrodipicolinate N-acetyltransferase activity"/>
    <property type="evidence" value="ECO:0007669"/>
    <property type="project" value="UniProtKB-EC"/>
</dbReference>
<dbReference type="GO" id="GO:0019877">
    <property type="term" value="P:diaminopimelate biosynthetic process"/>
    <property type="evidence" value="ECO:0007669"/>
    <property type="project" value="UniProtKB-UniRule"/>
</dbReference>
<dbReference type="GO" id="GO:0009089">
    <property type="term" value="P:lysine biosynthetic process via diaminopimelate"/>
    <property type="evidence" value="ECO:0007669"/>
    <property type="project" value="UniProtKB-UniRule"/>
</dbReference>
<dbReference type="Gene3D" id="2.160.10.10">
    <property type="entry name" value="Hexapeptide repeat proteins"/>
    <property type="match status" value="1"/>
</dbReference>
<dbReference type="Gene3D" id="3.30.70.250">
    <property type="entry name" value="Malonyl-CoA ACP transacylase, ACP-binding"/>
    <property type="match status" value="1"/>
</dbReference>
<dbReference type="HAMAP" id="MF_01691">
    <property type="entry name" value="DapH"/>
    <property type="match status" value="1"/>
</dbReference>
<dbReference type="InterPro" id="IPR019873">
    <property type="entry name" value="DapH"/>
</dbReference>
<dbReference type="InterPro" id="IPR013710">
    <property type="entry name" value="DapH_N"/>
</dbReference>
<dbReference type="InterPro" id="IPR001451">
    <property type="entry name" value="Hexapep"/>
</dbReference>
<dbReference type="InterPro" id="IPR018357">
    <property type="entry name" value="Hexapep_transf_CS"/>
</dbReference>
<dbReference type="InterPro" id="IPR050179">
    <property type="entry name" value="Trans_hexapeptide_repeat"/>
</dbReference>
<dbReference type="InterPro" id="IPR011004">
    <property type="entry name" value="Trimer_LpxA-like_sf"/>
</dbReference>
<dbReference type="NCBIfam" id="TIGR03532">
    <property type="entry name" value="DapD_Ac"/>
    <property type="match status" value="1"/>
</dbReference>
<dbReference type="PANTHER" id="PTHR43300:SF10">
    <property type="entry name" value="2,3,4,5-TETRAHYDROPYRIDINE-2,6-DICARBOXYLATE N-ACETYLTRANSFERASE"/>
    <property type="match status" value="1"/>
</dbReference>
<dbReference type="PANTHER" id="PTHR43300">
    <property type="entry name" value="ACETYLTRANSFERASE"/>
    <property type="match status" value="1"/>
</dbReference>
<dbReference type="Pfam" id="PF08503">
    <property type="entry name" value="DapH_N"/>
    <property type="match status" value="1"/>
</dbReference>
<dbReference type="Pfam" id="PF00132">
    <property type="entry name" value="Hexapep"/>
    <property type="match status" value="1"/>
</dbReference>
<dbReference type="Pfam" id="PF14602">
    <property type="entry name" value="Hexapep_2"/>
    <property type="match status" value="1"/>
</dbReference>
<dbReference type="SUPFAM" id="SSF51161">
    <property type="entry name" value="Trimeric LpxA-like enzymes"/>
    <property type="match status" value="1"/>
</dbReference>
<dbReference type="PROSITE" id="PS00101">
    <property type="entry name" value="HEXAPEP_TRANSFERASES"/>
    <property type="match status" value="1"/>
</dbReference>
<protein>
    <recommendedName>
        <fullName evidence="1">2,3,4,5-tetrahydropyridine-2,6-dicarboxylate N-acetyltransferase</fullName>
        <ecNumber evidence="1">2.3.1.89</ecNumber>
    </recommendedName>
    <alternativeName>
        <fullName evidence="1">Tetrahydrodipicolinate N-acetyltransferase</fullName>
        <shortName evidence="1">THP acetyltransferase</shortName>
        <shortName evidence="1">Tetrahydropicolinate acetylase</shortName>
    </alternativeName>
</protein>
<gene>
    <name evidence="1" type="primary">dapH</name>
    <name type="ordered locus">ABC2433</name>
</gene>
<accession>Q5WF92</accession>
<sequence length="240" mass="25114">MKMMDANEIIEFISKSEKKTPVKVYIKGQLDNLSFGEGVQSFINGNTGVVFGEWSEIEAVLNENAALIEDTVVENDRRYSAIPLLDLKGVEARIEPGAIIRDQVEIGKGAVIMMGASINIGAVIGEGTMIDMNAVLGGRATVGKNCHVGAGAVLAGVIEPPSASPVIIEDGVVIGANAVILEGVRVGAGAVVAAGAIVTEDVPANTVVAGTPARVIKEIDEKTKGKTEIKLELRRLNEDQ</sequence>
<organism>
    <name type="scientific">Shouchella clausii (strain KSM-K16)</name>
    <name type="common">Alkalihalobacillus clausii</name>
    <dbReference type="NCBI Taxonomy" id="66692"/>
    <lineage>
        <taxon>Bacteria</taxon>
        <taxon>Bacillati</taxon>
        <taxon>Bacillota</taxon>
        <taxon>Bacilli</taxon>
        <taxon>Bacillales</taxon>
        <taxon>Bacillaceae</taxon>
        <taxon>Shouchella</taxon>
    </lineage>
</organism>
<evidence type="ECO:0000255" key="1">
    <source>
        <dbReference type="HAMAP-Rule" id="MF_01691"/>
    </source>
</evidence>
<reference key="1">
    <citation type="submission" date="2003-10" db="EMBL/GenBank/DDBJ databases">
        <title>The complete genome sequence of the alkaliphilic Bacillus clausii KSM-K16.</title>
        <authorList>
            <person name="Takaki Y."/>
            <person name="Kageyama Y."/>
            <person name="Shimamura S."/>
            <person name="Suzuki H."/>
            <person name="Nishi S."/>
            <person name="Hatada Y."/>
            <person name="Kawai S."/>
            <person name="Ito S."/>
            <person name="Horikoshi K."/>
        </authorList>
    </citation>
    <scope>NUCLEOTIDE SEQUENCE [LARGE SCALE GENOMIC DNA]</scope>
    <source>
        <strain>KSM-K16</strain>
    </source>
</reference>
<feature type="chain" id="PRO_0000376635" description="2,3,4,5-tetrahydropyridine-2,6-dicarboxylate N-acetyltransferase">
    <location>
        <begin position="1"/>
        <end position="240"/>
    </location>
</feature>
<proteinExistence type="inferred from homology"/>
<name>DAPH_SHOC1</name>
<keyword id="KW-0012">Acyltransferase</keyword>
<keyword id="KW-0028">Amino-acid biosynthesis</keyword>
<keyword id="KW-0220">Diaminopimelate biosynthesis</keyword>
<keyword id="KW-0457">Lysine biosynthesis</keyword>
<keyword id="KW-1185">Reference proteome</keyword>
<keyword id="KW-0677">Repeat</keyword>
<keyword id="KW-0808">Transferase</keyword>